<organism>
    <name type="scientific">Drosophila yakuba</name>
    <name type="common">Fruit fly</name>
    <dbReference type="NCBI Taxonomy" id="7245"/>
    <lineage>
        <taxon>Eukaryota</taxon>
        <taxon>Metazoa</taxon>
        <taxon>Ecdysozoa</taxon>
        <taxon>Arthropoda</taxon>
        <taxon>Hexapoda</taxon>
        <taxon>Insecta</taxon>
        <taxon>Pterygota</taxon>
        <taxon>Neoptera</taxon>
        <taxon>Endopterygota</taxon>
        <taxon>Diptera</taxon>
        <taxon>Brachycera</taxon>
        <taxon>Muscomorpha</taxon>
        <taxon>Ephydroidea</taxon>
        <taxon>Drosophilidae</taxon>
        <taxon>Drosophila</taxon>
        <taxon>Sophophora</taxon>
    </lineage>
</organism>
<feature type="chain" id="PRO_0000377406" description="Protein phosphatase PTC7 homolog fig">
    <location>
        <begin position="1"/>
        <end position="320"/>
    </location>
</feature>
<feature type="domain" description="PPM-type phosphatase" evidence="4">
    <location>
        <begin position="49"/>
        <end position="315"/>
    </location>
</feature>
<feature type="binding site" evidence="1">
    <location>
        <position position="93"/>
    </location>
    <ligand>
        <name>Mn(2+)</name>
        <dbReference type="ChEBI" id="CHEBI:29035"/>
        <label>1</label>
    </ligand>
</feature>
<feature type="binding site" evidence="1">
    <location>
        <position position="93"/>
    </location>
    <ligand>
        <name>Mn(2+)</name>
        <dbReference type="ChEBI" id="CHEBI:29035"/>
        <label>2</label>
    </ligand>
</feature>
<feature type="binding site" evidence="1">
    <location>
        <position position="94"/>
    </location>
    <ligand>
        <name>Mn(2+)</name>
        <dbReference type="ChEBI" id="CHEBI:29035"/>
        <label>1</label>
    </ligand>
</feature>
<feature type="binding site" evidence="1">
    <location>
        <position position="238"/>
    </location>
    <ligand>
        <name>Mn(2+)</name>
        <dbReference type="ChEBI" id="CHEBI:29035"/>
        <label>2</label>
    </ligand>
</feature>
<gene>
    <name evidence="2" type="primary">fig</name>
    <name type="ORF">GE10429</name>
</gene>
<accession>B4PPK3</accession>
<evidence type="ECO:0000250" key="1">
    <source>
        <dbReference type="UniProtKB" id="P35813"/>
    </source>
</evidence>
<evidence type="ECO:0000250" key="2">
    <source>
        <dbReference type="UniProtKB" id="Q9VAH4"/>
    </source>
</evidence>
<evidence type="ECO:0000255" key="3"/>
<evidence type="ECO:0000255" key="4">
    <source>
        <dbReference type="PROSITE-ProRule" id="PRU01082"/>
    </source>
</evidence>
<evidence type="ECO:0000305" key="5"/>
<evidence type="ECO:0000312" key="6">
    <source>
        <dbReference type="EMBL" id="EDW98253.1"/>
    </source>
</evidence>
<comment type="catalytic activity">
    <reaction>
        <text>O-phospho-L-seryl-[protein] + H2O = L-seryl-[protein] + phosphate</text>
        <dbReference type="Rhea" id="RHEA:20629"/>
        <dbReference type="Rhea" id="RHEA-COMP:9863"/>
        <dbReference type="Rhea" id="RHEA-COMP:11604"/>
        <dbReference type="ChEBI" id="CHEBI:15377"/>
        <dbReference type="ChEBI" id="CHEBI:29999"/>
        <dbReference type="ChEBI" id="CHEBI:43474"/>
        <dbReference type="ChEBI" id="CHEBI:83421"/>
        <dbReference type="EC" id="3.1.3.16"/>
    </reaction>
</comment>
<comment type="catalytic activity">
    <reaction>
        <text>O-phospho-L-threonyl-[protein] + H2O = L-threonyl-[protein] + phosphate</text>
        <dbReference type="Rhea" id="RHEA:47004"/>
        <dbReference type="Rhea" id="RHEA-COMP:11060"/>
        <dbReference type="Rhea" id="RHEA-COMP:11605"/>
        <dbReference type="ChEBI" id="CHEBI:15377"/>
        <dbReference type="ChEBI" id="CHEBI:30013"/>
        <dbReference type="ChEBI" id="CHEBI:43474"/>
        <dbReference type="ChEBI" id="CHEBI:61977"/>
        <dbReference type="EC" id="3.1.3.16"/>
    </reaction>
</comment>
<comment type="cofactor">
    <cofactor evidence="1 5">
        <name>Mg(2+)</name>
        <dbReference type="ChEBI" id="CHEBI:18420"/>
    </cofactor>
    <cofactor evidence="1 5">
        <name>Mn(2+)</name>
        <dbReference type="ChEBI" id="CHEBI:29035"/>
    </cofactor>
</comment>
<comment type="similarity">
    <text evidence="3">Belongs to the PP2C family.</text>
</comment>
<name>PTC71_DROYA</name>
<proteinExistence type="inferred from homology"/>
<protein>
    <recommendedName>
        <fullName>Protein phosphatase PTC7 homolog fig</fullName>
    </recommendedName>
    <alternativeName>
        <fullName>Fos intronic gene protein</fullName>
        <ecNumber>3.1.3.16</ecNumber>
    </alternativeName>
</protein>
<keyword id="KW-0378">Hydrolase</keyword>
<keyword id="KW-0460">Magnesium</keyword>
<keyword id="KW-0464">Manganese</keyword>
<keyword id="KW-0479">Metal-binding</keyword>
<keyword id="KW-0904">Protein phosphatase</keyword>
<reference evidence="6" key="1">
    <citation type="journal article" date="2007" name="Nature">
        <title>Evolution of genes and genomes on the Drosophila phylogeny.</title>
        <authorList>
            <consortium name="Drosophila 12 genomes consortium"/>
        </authorList>
    </citation>
    <scope>NUCLEOTIDE SEQUENCE [LARGE SCALE GENOMIC DNA]</scope>
    <source>
        <strain evidence="6">Tai18E2 / Tucson 14021-0261.01</strain>
    </source>
</reference>
<dbReference type="EC" id="3.1.3.16"/>
<dbReference type="EMBL" id="CM000160">
    <property type="protein sequence ID" value="EDW98253.1"/>
    <property type="molecule type" value="Genomic_DNA"/>
</dbReference>
<dbReference type="SMR" id="B4PPK3"/>
<dbReference type="EnsemblMetazoa" id="FBtr0256947">
    <property type="protein sequence ID" value="FBpp0255439"/>
    <property type="gene ID" value="FBgn0228292"/>
</dbReference>
<dbReference type="EnsemblMetazoa" id="XM_002098505.4">
    <property type="protein sequence ID" value="XP_002098541.1"/>
    <property type="gene ID" value="LOC6538006"/>
</dbReference>
<dbReference type="GeneID" id="6538006"/>
<dbReference type="KEGG" id="dya:Dyak_GE10429"/>
<dbReference type="CTD" id="43511"/>
<dbReference type="eggNOG" id="KOG1379">
    <property type="taxonomic scope" value="Eukaryota"/>
</dbReference>
<dbReference type="HOGENOM" id="CLU_029404_3_0_1"/>
<dbReference type="OMA" id="DSWFVSS"/>
<dbReference type="OrthoDB" id="60843at2759"/>
<dbReference type="PhylomeDB" id="B4PPK3"/>
<dbReference type="Proteomes" id="UP000002282">
    <property type="component" value="Chromosome 3R"/>
</dbReference>
<dbReference type="GO" id="GO:0005739">
    <property type="term" value="C:mitochondrion"/>
    <property type="evidence" value="ECO:0007669"/>
    <property type="project" value="TreeGrafter"/>
</dbReference>
<dbReference type="GO" id="GO:0046872">
    <property type="term" value="F:metal ion binding"/>
    <property type="evidence" value="ECO:0007669"/>
    <property type="project" value="UniProtKB-KW"/>
</dbReference>
<dbReference type="GO" id="GO:0004722">
    <property type="term" value="F:protein serine/threonine phosphatase activity"/>
    <property type="evidence" value="ECO:0000250"/>
    <property type="project" value="UniProtKB"/>
</dbReference>
<dbReference type="GO" id="GO:0016311">
    <property type="term" value="P:dephosphorylation"/>
    <property type="evidence" value="ECO:0000250"/>
    <property type="project" value="UniProtKB"/>
</dbReference>
<dbReference type="FunFam" id="3.60.40.10:FF:000009">
    <property type="entry name" value="Blast:Protein phosphatase PTC7 homolog"/>
    <property type="match status" value="1"/>
</dbReference>
<dbReference type="Gene3D" id="3.60.40.10">
    <property type="entry name" value="PPM-type phosphatase domain"/>
    <property type="match status" value="1"/>
</dbReference>
<dbReference type="InterPro" id="IPR036457">
    <property type="entry name" value="PPM-type-like_dom_sf"/>
</dbReference>
<dbReference type="InterPro" id="IPR001932">
    <property type="entry name" value="PPM-type_phosphatase-like_dom"/>
</dbReference>
<dbReference type="InterPro" id="IPR039123">
    <property type="entry name" value="PPTC7"/>
</dbReference>
<dbReference type="PANTHER" id="PTHR12320">
    <property type="entry name" value="PROTEIN PHOSPHATASE 2C"/>
    <property type="match status" value="1"/>
</dbReference>
<dbReference type="PANTHER" id="PTHR12320:SF1">
    <property type="entry name" value="PROTEIN PHOSPHATASE PTC7 HOMOLOG"/>
    <property type="match status" value="1"/>
</dbReference>
<dbReference type="Pfam" id="PF13672">
    <property type="entry name" value="PP2C_2"/>
    <property type="match status" value="1"/>
</dbReference>
<dbReference type="SMART" id="SM00331">
    <property type="entry name" value="PP2C_SIG"/>
    <property type="match status" value="1"/>
</dbReference>
<dbReference type="SMART" id="SM00332">
    <property type="entry name" value="PP2Cc"/>
    <property type="match status" value="1"/>
</dbReference>
<dbReference type="SUPFAM" id="SSF81606">
    <property type="entry name" value="PP2C-like"/>
    <property type="match status" value="1"/>
</dbReference>
<dbReference type="PROSITE" id="PS51746">
    <property type="entry name" value="PPM_2"/>
    <property type="match status" value="1"/>
</dbReference>
<sequence length="320" mass="35522">MITHLKNWPRLLNRFVLQLKNARHSIHQFTHLAGRLQRPPKSGKSSRDPYLVTAVQGRSKKPRYPGERANQRFGEDSWFVSSTPLAEVMGVADGVGGWRDVGVDAGRFAKELMTCCSGQTQRSGFDGRSARNLLIAGFQELTHREQPVVGSSTACLATMHRRDCILYTANLGDSGFLVVRNGRVLHRSVEQTHDFNTPYQLTVPPADRQDCYYCDKPEMAVSTRHSLLPGDLVLLATDGLFDNMPESMLLKILNGLKERGERDLLQGASQVVEKARELSLNATFQSPFAIKARQHNVPYSGGGKPDDITLILASVEVPRA</sequence>